<protein>
    <recommendedName>
        <fullName>Uncharacterized protein C8orf74 homolog</fullName>
    </recommendedName>
</protein>
<sequence>MALLTPQGVKEVFQFQKPQGRQHLRRLLNWEEFDELRDARQSILLDTLYDSVIFAVGKGFPWVEVVQVVKFTEELLKETKGCSITEAVTILGKKLRDYQKQFNVTHLLALCDYSHNTFIRHYRLYQYVLSQDQEVNLTVAHEQICAPPQPLPLTDGTDRDVWRHEQQVAELSTAEVEKRANVLMLKETLRMEQAQMLQKAFGVEEAPGQLQPHPTLRKEALERLVSEAIHIQIACLQELLQYEIQAAFDILDLRLQKKTLSLSAPPPPLPCITTGPAALEDSPKASKANKGKKAKAKK</sequence>
<feature type="chain" id="PRO_0000270932" description="Uncharacterized protein C8orf74 homolog">
    <location>
        <begin position="1"/>
        <end position="298"/>
    </location>
</feature>
<feature type="region of interest" description="Disordered" evidence="1">
    <location>
        <begin position="264"/>
        <end position="298"/>
    </location>
</feature>
<feature type="compositionally biased region" description="Basic residues" evidence="1">
    <location>
        <begin position="287"/>
        <end position="298"/>
    </location>
</feature>
<name>CH074_MOUSE</name>
<keyword id="KW-1185">Reference proteome</keyword>
<dbReference type="EMBL" id="AK005778">
    <property type="protein sequence ID" value="BAB24234.2"/>
    <property type="status" value="ALT_FRAME"/>
    <property type="molecule type" value="mRNA"/>
</dbReference>
<dbReference type="EMBL" id="AK016302">
    <property type="protein sequence ID" value="BAC25478.1"/>
    <property type="status" value="ALT_FRAME"/>
    <property type="molecule type" value="mRNA"/>
</dbReference>
<dbReference type="EMBL" id="BC048583">
    <property type="protein sequence ID" value="AAH48583.1"/>
    <property type="molecule type" value="mRNA"/>
</dbReference>
<dbReference type="CCDS" id="CCDS36950.1"/>
<dbReference type="RefSeq" id="NP_080635.2">
    <property type="nucleotide sequence ID" value="NM_026359.4"/>
</dbReference>
<dbReference type="SMR" id="Q80ZQ3"/>
<dbReference type="FunCoup" id="Q80ZQ3">
    <property type="interactions" value="9"/>
</dbReference>
<dbReference type="STRING" id="10090.ENSMUSP00000022532"/>
<dbReference type="PhosphoSitePlus" id="Q80ZQ3"/>
<dbReference type="PaxDb" id="10090-ENSMUSP00000022532"/>
<dbReference type="Antibodypedia" id="22088">
    <property type="antibodies" value="71 antibodies from 13 providers"/>
</dbReference>
<dbReference type="DNASU" id="67750"/>
<dbReference type="Ensembl" id="ENSMUST00000022532.6">
    <property type="protein sequence ID" value="ENSMUSP00000022532.6"/>
    <property type="gene ID" value="ENSMUSG00000021961.7"/>
</dbReference>
<dbReference type="Ensembl" id="ENSMUST00000224600.2">
    <property type="protein sequence ID" value="ENSMUSP00000152904.2"/>
    <property type="gene ID" value="ENSMUSG00000021961.7"/>
</dbReference>
<dbReference type="GeneID" id="67750"/>
<dbReference type="KEGG" id="mmu:67750"/>
<dbReference type="UCSC" id="uc007uhz.1">
    <property type="organism name" value="mouse"/>
</dbReference>
<dbReference type="AGR" id="MGI:1915000"/>
<dbReference type="MGI" id="MGI:1915000">
    <property type="gene designation" value="4930578I06Rik"/>
</dbReference>
<dbReference type="VEuPathDB" id="HostDB:ENSMUSG00000021961"/>
<dbReference type="eggNOG" id="ENOG502RYV3">
    <property type="taxonomic scope" value="Eukaryota"/>
</dbReference>
<dbReference type="GeneTree" id="ENSGT00940000154323"/>
<dbReference type="HOGENOM" id="CLU_081156_0_0_1"/>
<dbReference type="InParanoid" id="Q80ZQ3"/>
<dbReference type="OMA" id="YQFVLCR"/>
<dbReference type="OrthoDB" id="6103133at2759"/>
<dbReference type="PhylomeDB" id="Q80ZQ3"/>
<dbReference type="TreeFam" id="TF343725"/>
<dbReference type="BioGRID-ORCS" id="67750">
    <property type="hits" value="3 hits in 77 CRISPR screens"/>
</dbReference>
<dbReference type="PRO" id="PR:Q80ZQ3"/>
<dbReference type="Proteomes" id="UP000000589">
    <property type="component" value="Chromosome 14"/>
</dbReference>
<dbReference type="RNAct" id="Q80ZQ3">
    <property type="molecule type" value="protein"/>
</dbReference>
<dbReference type="Bgee" id="ENSMUSG00000021961">
    <property type="expression patterns" value="Expressed in spermatid and 6 other cell types or tissues"/>
</dbReference>
<dbReference type="InterPro" id="IPR032727">
    <property type="entry name" value="CLAMP"/>
</dbReference>
<dbReference type="PANTHER" id="PTHR28457">
    <property type="entry name" value="COILED-COIL DOMAIN-CONTAINING PROTEIN 189"/>
    <property type="match status" value="1"/>
</dbReference>
<dbReference type="PANTHER" id="PTHR28457:SF2">
    <property type="entry name" value="SIMILAR TO 4930578I06RIK PROTEIN"/>
    <property type="match status" value="1"/>
</dbReference>
<dbReference type="Pfam" id="PF14769">
    <property type="entry name" value="CLAMP"/>
    <property type="match status" value="1"/>
</dbReference>
<evidence type="ECO:0000256" key="1">
    <source>
        <dbReference type="SAM" id="MobiDB-lite"/>
    </source>
</evidence>
<evidence type="ECO:0000305" key="2"/>
<organism>
    <name type="scientific">Mus musculus</name>
    <name type="common">Mouse</name>
    <dbReference type="NCBI Taxonomy" id="10090"/>
    <lineage>
        <taxon>Eukaryota</taxon>
        <taxon>Metazoa</taxon>
        <taxon>Chordata</taxon>
        <taxon>Craniata</taxon>
        <taxon>Vertebrata</taxon>
        <taxon>Euteleostomi</taxon>
        <taxon>Mammalia</taxon>
        <taxon>Eutheria</taxon>
        <taxon>Euarchontoglires</taxon>
        <taxon>Glires</taxon>
        <taxon>Rodentia</taxon>
        <taxon>Myomorpha</taxon>
        <taxon>Muroidea</taxon>
        <taxon>Muridae</taxon>
        <taxon>Murinae</taxon>
        <taxon>Mus</taxon>
        <taxon>Mus</taxon>
    </lineage>
</organism>
<comment type="sequence caution" evidence="2">
    <conflict type="frameshift">
        <sequence resource="EMBL-CDS" id="BAB24234"/>
    </conflict>
</comment>
<comment type="sequence caution" evidence="2">
    <conflict type="frameshift">
        <sequence resource="EMBL-CDS" id="BAC25478"/>
    </conflict>
</comment>
<proteinExistence type="evidence at transcript level"/>
<accession>Q80ZQ3</accession>
<accession>Q9CVZ7</accession>
<reference key="1">
    <citation type="journal article" date="2005" name="Science">
        <title>The transcriptional landscape of the mammalian genome.</title>
        <authorList>
            <person name="Carninci P."/>
            <person name="Kasukawa T."/>
            <person name="Katayama S."/>
            <person name="Gough J."/>
            <person name="Frith M.C."/>
            <person name="Maeda N."/>
            <person name="Oyama R."/>
            <person name="Ravasi T."/>
            <person name="Lenhard B."/>
            <person name="Wells C."/>
            <person name="Kodzius R."/>
            <person name="Shimokawa K."/>
            <person name="Bajic V.B."/>
            <person name="Brenner S.E."/>
            <person name="Batalov S."/>
            <person name="Forrest A.R."/>
            <person name="Zavolan M."/>
            <person name="Davis M.J."/>
            <person name="Wilming L.G."/>
            <person name="Aidinis V."/>
            <person name="Allen J.E."/>
            <person name="Ambesi-Impiombato A."/>
            <person name="Apweiler R."/>
            <person name="Aturaliya R.N."/>
            <person name="Bailey T.L."/>
            <person name="Bansal M."/>
            <person name="Baxter L."/>
            <person name="Beisel K.W."/>
            <person name="Bersano T."/>
            <person name="Bono H."/>
            <person name="Chalk A.M."/>
            <person name="Chiu K.P."/>
            <person name="Choudhary V."/>
            <person name="Christoffels A."/>
            <person name="Clutterbuck D.R."/>
            <person name="Crowe M.L."/>
            <person name="Dalla E."/>
            <person name="Dalrymple B.P."/>
            <person name="de Bono B."/>
            <person name="Della Gatta G."/>
            <person name="di Bernardo D."/>
            <person name="Down T."/>
            <person name="Engstrom P."/>
            <person name="Fagiolini M."/>
            <person name="Faulkner G."/>
            <person name="Fletcher C.F."/>
            <person name="Fukushima T."/>
            <person name="Furuno M."/>
            <person name="Futaki S."/>
            <person name="Gariboldi M."/>
            <person name="Georgii-Hemming P."/>
            <person name="Gingeras T.R."/>
            <person name="Gojobori T."/>
            <person name="Green R.E."/>
            <person name="Gustincich S."/>
            <person name="Harbers M."/>
            <person name="Hayashi Y."/>
            <person name="Hensch T.K."/>
            <person name="Hirokawa N."/>
            <person name="Hill D."/>
            <person name="Huminiecki L."/>
            <person name="Iacono M."/>
            <person name="Ikeo K."/>
            <person name="Iwama A."/>
            <person name="Ishikawa T."/>
            <person name="Jakt M."/>
            <person name="Kanapin A."/>
            <person name="Katoh M."/>
            <person name="Kawasawa Y."/>
            <person name="Kelso J."/>
            <person name="Kitamura H."/>
            <person name="Kitano H."/>
            <person name="Kollias G."/>
            <person name="Krishnan S.P."/>
            <person name="Kruger A."/>
            <person name="Kummerfeld S.K."/>
            <person name="Kurochkin I.V."/>
            <person name="Lareau L.F."/>
            <person name="Lazarevic D."/>
            <person name="Lipovich L."/>
            <person name="Liu J."/>
            <person name="Liuni S."/>
            <person name="McWilliam S."/>
            <person name="Madan Babu M."/>
            <person name="Madera M."/>
            <person name="Marchionni L."/>
            <person name="Matsuda H."/>
            <person name="Matsuzawa S."/>
            <person name="Miki H."/>
            <person name="Mignone F."/>
            <person name="Miyake S."/>
            <person name="Morris K."/>
            <person name="Mottagui-Tabar S."/>
            <person name="Mulder N."/>
            <person name="Nakano N."/>
            <person name="Nakauchi H."/>
            <person name="Ng P."/>
            <person name="Nilsson R."/>
            <person name="Nishiguchi S."/>
            <person name="Nishikawa S."/>
            <person name="Nori F."/>
            <person name="Ohara O."/>
            <person name="Okazaki Y."/>
            <person name="Orlando V."/>
            <person name="Pang K.C."/>
            <person name="Pavan W.J."/>
            <person name="Pavesi G."/>
            <person name="Pesole G."/>
            <person name="Petrovsky N."/>
            <person name="Piazza S."/>
            <person name="Reed J."/>
            <person name="Reid J.F."/>
            <person name="Ring B.Z."/>
            <person name="Ringwald M."/>
            <person name="Rost B."/>
            <person name="Ruan Y."/>
            <person name="Salzberg S.L."/>
            <person name="Sandelin A."/>
            <person name="Schneider C."/>
            <person name="Schoenbach C."/>
            <person name="Sekiguchi K."/>
            <person name="Semple C.A."/>
            <person name="Seno S."/>
            <person name="Sessa L."/>
            <person name="Sheng Y."/>
            <person name="Shibata Y."/>
            <person name="Shimada H."/>
            <person name="Shimada K."/>
            <person name="Silva D."/>
            <person name="Sinclair B."/>
            <person name="Sperling S."/>
            <person name="Stupka E."/>
            <person name="Sugiura K."/>
            <person name="Sultana R."/>
            <person name="Takenaka Y."/>
            <person name="Taki K."/>
            <person name="Tammoja K."/>
            <person name="Tan S.L."/>
            <person name="Tang S."/>
            <person name="Taylor M.S."/>
            <person name="Tegner J."/>
            <person name="Teichmann S.A."/>
            <person name="Ueda H.R."/>
            <person name="van Nimwegen E."/>
            <person name="Verardo R."/>
            <person name="Wei C.L."/>
            <person name="Yagi K."/>
            <person name="Yamanishi H."/>
            <person name="Zabarovsky E."/>
            <person name="Zhu S."/>
            <person name="Zimmer A."/>
            <person name="Hide W."/>
            <person name="Bult C."/>
            <person name="Grimmond S.M."/>
            <person name="Teasdale R.D."/>
            <person name="Liu E.T."/>
            <person name="Brusic V."/>
            <person name="Quackenbush J."/>
            <person name="Wahlestedt C."/>
            <person name="Mattick J.S."/>
            <person name="Hume D.A."/>
            <person name="Kai C."/>
            <person name="Sasaki D."/>
            <person name="Tomaru Y."/>
            <person name="Fukuda S."/>
            <person name="Kanamori-Katayama M."/>
            <person name="Suzuki M."/>
            <person name="Aoki J."/>
            <person name="Arakawa T."/>
            <person name="Iida J."/>
            <person name="Imamura K."/>
            <person name="Itoh M."/>
            <person name="Kato T."/>
            <person name="Kawaji H."/>
            <person name="Kawagashira N."/>
            <person name="Kawashima T."/>
            <person name="Kojima M."/>
            <person name="Kondo S."/>
            <person name="Konno H."/>
            <person name="Nakano K."/>
            <person name="Ninomiya N."/>
            <person name="Nishio T."/>
            <person name="Okada M."/>
            <person name="Plessy C."/>
            <person name="Shibata K."/>
            <person name="Shiraki T."/>
            <person name="Suzuki S."/>
            <person name="Tagami M."/>
            <person name="Waki K."/>
            <person name="Watahiki A."/>
            <person name="Okamura-Oho Y."/>
            <person name="Suzuki H."/>
            <person name="Kawai J."/>
            <person name="Hayashizaki Y."/>
        </authorList>
    </citation>
    <scope>NUCLEOTIDE SEQUENCE [LARGE SCALE MRNA]</scope>
    <source>
        <strain>C57BL/6J</strain>
        <tissue>Testis</tissue>
    </source>
</reference>
<reference key="2">
    <citation type="journal article" date="2004" name="Genome Res.">
        <title>The status, quality, and expansion of the NIH full-length cDNA project: the Mammalian Gene Collection (MGC).</title>
        <authorList>
            <consortium name="The MGC Project Team"/>
        </authorList>
    </citation>
    <scope>NUCLEOTIDE SEQUENCE [LARGE SCALE MRNA]</scope>
    <source>
        <tissue>Testis</tissue>
    </source>
</reference>